<comment type="function">
    <text evidence="1">Specifically methylates position 2 of adenine 2503 in 23S rRNA and position 2 of adenine 37 in tRNAs. m2A2503 modification seems to play a crucial role in the proofreading step occurring at the peptidyl transferase center and thus would serve to optimize ribosomal fidelity.</text>
</comment>
<comment type="catalytic activity">
    <reaction evidence="1">
        <text>adenosine(2503) in 23S rRNA + 2 reduced [2Fe-2S]-[ferredoxin] + 2 S-adenosyl-L-methionine = 2-methyladenosine(2503) in 23S rRNA + 5'-deoxyadenosine + L-methionine + 2 oxidized [2Fe-2S]-[ferredoxin] + S-adenosyl-L-homocysteine</text>
        <dbReference type="Rhea" id="RHEA:42916"/>
        <dbReference type="Rhea" id="RHEA-COMP:10000"/>
        <dbReference type="Rhea" id="RHEA-COMP:10001"/>
        <dbReference type="Rhea" id="RHEA-COMP:10152"/>
        <dbReference type="Rhea" id="RHEA-COMP:10282"/>
        <dbReference type="ChEBI" id="CHEBI:17319"/>
        <dbReference type="ChEBI" id="CHEBI:33737"/>
        <dbReference type="ChEBI" id="CHEBI:33738"/>
        <dbReference type="ChEBI" id="CHEBI:57844"/>
        <dbReference type="ChEBI" id="CHEBI:57856"/>
        <dbReference type="ChEBI" id="CHEBI:59789"/>
        <dbReference type="ChEBI" id="CHEBI:74411"/>
        <dbReference type="ChEBI" id="CHEBI:74497"/>
        <dbReference type="EC" id="2.1.1.192"/>
    </reaction>
</comment>
<comment type="catalytic activity">
    <reaction evidence="1">
        <text>adenosine(37) in tRNA + 2 reduced [2Fe-2S]-[ferredoxin] + 2 S-adenosyl-L-methionine = 2-methyladenosine(37) in tRNA + 5'-deoxyadenosine + L-methionine + 2 oxidized [2Fe-2S]-[ferredoxin] + S-adenosyl-L-homocysteine</text>
        <dbReference type="Rhea" id="RHEA:43332"/>
        <dbReference type="Rhea" id="RHEA-COMP:10000"/>
        <dbReference type="Rhea" id="RHEA-COMP:10001"/>
        <dbReference type="Rhea" id="RHEA-COMP:10162"/>
        <dbReference type="Rhea" id="RHEA-COMP:10485"/>
        <dbReference type="ChEBI" id="CHEBI:17319"/>
        <dbReference type="ChEBI" id="CHEBI:33737"/>
        <dbReference type="ChEBI" id="CHEBI:33738"/>
        <dbReference type="ChEBI" id="CHEBI:57844"/>
        <dbReference type="ChEBI" id="CHEBI:57856"/>
        <dbReference type="ChEBI" id="CHEBI:59789"/>
        <dbReference type="ChEBI" id="CHEBI:74411"/>
        <dbReference type="ChEBI" id="CHEBI:74497"/>
        <dbReference type="EC" id="2.1.1.192"/>
    </reaction>
</comment>
<comment type="cofactor">
    <cofactor evidence="1">
        <name>[4Fe-4S] cluster</name>
        <dbReference type="ChEBI" id="CHEBI:49883"/>
    </cofactor>
    <text evidence="1">Binds 1 [4Fe-4S] cluster. The cluster is coordinated with 3 cysteines and an exchangeable S-adenosyl-L-methionine.</text>
</comment>
<comment type="subcellular location">
    <subcellularLocation>
        <location evidence="1">Cytoplasm</location>
    </subcellularLocation>
</comment>
<comment type="miscellaneous">
    <text evidence="1">Reaction proceeds by a ping-pong mechanism involving intermediate methylation of a conserved cysteine residue.</text>
</comment>
<comment type="similarity">
    <text evidence="1">Belongs to the radical SAM superfamily. RlmN family.</text>
</comment>
<gene>
    <name evidence="1" type="primary">rlmN</name>
    <name type="ordered locus">IL2037</name>
</gene>
<dbReference type="EC" id="2.1.1.192" evidence="1"/>
<dbReference type="EMBL" id="AE017340">
    <property type="protein sequence ID" value="AAV82869.1"/>
    <property type="molecule type" value="Genomic_DNA"/>
</dbReference>
<dbReference type="RefSeq" id="WP_011235265.1">
    <property type="nucleotide sequence ID" value="NC_006512.1"/>
</dbReference>
<dbReference type="SMR" id="Q5QYC0"/>
<dbReference type="STRING" id="283942.IL2037"/>
<dbReference type="GeneID" id="41337227"/>
<dbReference type="KEGG" id="ilo:IL2037"/>
<dbReference type="eggNOG" id="COG0820">
    <property type="taxonomic scope" value="Bacteria"/>
</dbReference>
<dbReference type="HOGENOM" id="CLU_029101_0_0_6"/>
<dbReference type="OrthoDB" id="9793973at2"/>
<dbReference type="Proteomes" id="UP000001171">
    <property type="component" value="Chromosome"/>
</dbReference>
<dbReference type="GO" id="GO:0005737">
    <property type="term" value="C:cytoplasm"/>
    <property type="evidence" value="ECO:0007669"/>
    <property type="project" value="UniProtKB-SubCell"/>
</dbReference>
<dbReference type="GO" id="GO:0051539">
    <property type="term" value="F:4 iron, 4 sulfur cluster binding"/>
    <property type="evidence" value="ECO:0007669"/>
    <property type="project" value="UniProtKB-UniRule"/>
</dbReference>
<dbReference type="GO" id="GO:0046872">
    <property type="term" value="F:metal ion binding"/>
    <property type="evidence" value="ECO:0007669"/>
    <property type="project" value="UniProtKB-KW"/>
</dbReference>
<dbReference type="GO" id="GO:0070040">
    <property type="term" value="F:rRNA (adenine(2503)-C2-)-methyltransferase activity"/>
    <property type="evidence" value="ECO:0007669"/>
    <property type="project" value="UniProtKB-UniRule"/>
</dbReference>
<dbReference type="GO" id="GO:0019843">
    <property type="term" value="F:rRNA binding"/>
    <property type="evidence" value="ECO:0007669"/>
    <property type="project" value="UniProtKB-UniRule"/>
</dbReference>
<dbReference type="GO" id="GO:0002935">
    <property type="term" value="F:tRNA (adenine(37)-C2)-methyltransferase activity"/>
    <property type="evidence" value="ECO:0007669"/>
    <property type="project" value="UniProtKB-UniRule"/>
</dbReference>
<dbReference type="GO" id="GO:0000049">
    <property type="term" value="F:tRNA binding"/>
    <property type="evidence" value="ECO:0007669"/>
    <property type="project" value="UniProtKB-UniRule"/>
</dbReference>
<dbReference type="GO" id="GO:0070475">
    <property type="term" value="P:rRNA base methylation"/>
    <property type="evidence" value="ECO:0007669"/>
    <property type="project" value="UniProtKB-UniRule"/>
</dbReference>
<dbReference type="GO" id="GO:0030488">
    <property type="term" value="P:tRNA methylation"/>
    <property type="evidence" value="ECO:0007669"/>
    <property type="project" value="UniProtKB-UniRule"/>
</dbReference>
<dbReference type="CDD" id="cd01335">
    <property type="entry name" value="Radical_SAM"/>
    <property type="match status" value="1"/>
</dbReference>
<dbReference type="FunFam" id="1.10.150.530:FF:000003">
    <property type="entry name" value="Dual-specificity RNA methyltransferase RlmN"/>
    <property type="match status" value="1"/>
</dbReference>
<dbReference type="FunFam" id="3.20.20.70:FF:000008">
    <property type="entry name" value="Dual-specificity RNA methyltransferase RlmN"/>
    <property type="match status" value="1"/>
</dbReference>
<dbReference type="Gene3D" id="1.10.150.530">
    <property type="match status" value="1"/>
</dbReference>
<dbReference type="Gene3D" id="3.20.20.70">
    <property type="entry name" value="Aldolase class I"/>
    <property type="match status" value="1"/>
</dbReference>
<dbReference type="HAMAP" id="MF_01849">
    <property type="entry name" value="RNA_methyltr_RlmN"/>
    <property type="match status" value="1"/>
</dbReference>
<dbReference type="InterPro" id="IPR013785">
    <property type="entry name" value="Aldolase_TIM"/>
</dbReference>
<dbReference type="InterPro" id="IPR040072">
    <property type="entry name" value="Methyltransferase_A"/>
</dbReference>
<dbReference type="InterPro" id="IPR048641">
    <property type="entry name" value="RlmN_N"/>
</dbReference>
<dbReference type="InterPro" id="IPR027492">
    <property type="entry name" value="RNA_MTrfase_RlmN"/>
</dbReference>
<dbReference type="InterPro" id="IPR004383">
    <property type="entry name" value="rRNA_lsu_MTrfase_RlmN/Cfr"/>
</dbReference>
<dbReference type="InterPro" id="IPR007197">
    <property type="entry name" value="rSAM"/>
</dbReference>
<dbReference type="NCBIfam" id="NF008396">
    <property type="entry name" value="PRK11194.1"/>
    <property type="match status" value="1"/>
</dbReference>
<dbReference type="NCBIfam" id="TIGR00048">
    <property type="entry name" value="rRNA_mod_RlmN"/>
    <property type="match status" value="1"/>
</dbReference>
<dbReference type="PANTHER" id="PTHR30544">
    <property type="entry name" value="23S RRNA METHYLTRANSFERASE"/>
    <property type="match status" value="1"/>
</dbReference>
<dbReference type="PANTHER" id="PTHR30544:SF5">
    <property type="entry name" value="RADICAL SAM CORE DOMAIN-CONTAINING PROTEIN"/>
    <property type="match status" value="1"/>
</dbReference>
<dbReference type="Pfam" id="PF04055">
    <property type="entry name" value="Radical_SAM"/>
    <property type="match status" value="1"/>
</dbReference>
<dbReference type="Pfam" id="PF21016">
    <property type="entry name" value="RlmN_N"/>
    <property type="match status" value="1"/>
</dbReference>
<dbReference type="PIRSF" id="PIRSF006004">
    <property type="entry name" value="CHP00048"/>
    <property type="match status" value="1"/>
</dbReference>
<dbReference type="SFLD" id="SFLDF00275">
    <property type="entry name" value="adenosine_C2_methyltransferase"/>
    <property type="match status" value="1"/>
</dbReference>
<dbReference type="SFLD" id="SFLDS00029">
    <property type="entry name" value="Radical_SAM"/>
    <property type="match status" value="1"/>
</dbReference>
<dbReference type="SUPFAM" id="SSF102114">
    <property type="entry name" value="Radical SAM enzymes"/>
    <property type="match status" value="1"/>
</dbReference>
<dbReference type="PROSITE" id="PS51918">
    <property type="entry name" value="RADICAL_SAM"/>
    <property type="match status" value="1"/>
</dbReference>
<sequence>MTNAIDKKVNLLDLNREGIKEFFREMGEKPFRAEQVMKWLYHFCVDDFDEMTNLNKALREKLKQVAEIRAPEVREQQQSSDGTIKFAMTLFDGQDVETVWIPEGDRATLCVSSQVGCALECTFCSTGAQGFNRNLSVAEIIGQVWRVNQLLGAYGKTGIKPVTNVVMMGMGEPLLNLNNVVPAMELMLDDLGFGLSKRRVTLSTSGVVPALEKLRERIDVMLAISLHAPDDELRNEIVPINKKYNIEEFLASSRRYVEQSKAQRKVTVEYVMLDHVNDSTDQAHALAKTLKDTPSKINLIPFNPFPGSDYGRSSNSRIDRFAKVLMEYGLTVMVRKTRGDDIDAACGQLVGDVIDRTKRILKRQQKQRGGEAIAVKTT</sequence>
<reference key="1">
    <citation type="journal article" date="2004" name="Proc. Natl. Acad. Sci. U.S.A.">
        <title>Genome sequence of the deep-sea gamma-proteobacterium Idiomarina loihiensis reveals amino acid fermentation as a source of carbon and energy.</title>
        <authorList>
            <person name="Hou S."/>
            <person name="Saw J.H."/>
            <person name="Lee K.S."/>
            <person name="Freitas T.A."/>
            <person name="Belisle C."/>
            <person name="Kawarabayasi Y."/>
            <person name="Donachie S.P."/>
            <person name="Pikina A."/>
            <person name="Galperin M.Y."/>
            <person name="Koonin E.V."/>
            <person name="Makarova K.S."/>
            <person name="Omelchenko M.V."/>
            <person name="Sorokin A."/>
            <person name="Wolf Y.I."/>
            <person name="Li Q.X."/>
            <person name="Keum Y.S."/>
            <person name="Campbell S."/>
            <person name="Denery J."/>
            <person name="Aizawa S."/>
            <person name="Shibata S."/>
            <person name="Malahoff A."/>
            <person name="Alam M."/>
        </authorList>
    </citation>
    <scope>NUCLEOTIDE SEQUENCE [LARGE SCALE GENOMIC DNA]</scope>
    <source>
        <strain>ATCC BAA-735 / DSM 15497 / L2-TR</strain>
    </source>
</reference>
<evidence type="ECO:0000255" key="1">
    <source>
        <dbReference type="HAMAP-Rule" id="MF_01849"/>
    </source>
</evidence>
<evidence type="ECO:0000255" key="2">
    <source>
        <dbReference type="PROSITE-ProRule" id="PRU01266"/>
    </source>
</evidence>
<proteinExistence type="inferred from homology"/>
<organism>
    <name type="scientific">Idiomarina loihiensis (strain ATCC BAA-735 / DSM 15497 / L2-TR)</name>
    <dbReference type="NCBI Taxonomy" id="283942"/>
    <lineage>
        <taxon>Bacteria</taxon>
        <taxon>Pseudomonadati</taxon>
        <taxon>Pseudomonadota</taxon>
        <taxon>Gammaproteobacteria</taxon>
        <taxon>Alteromonadales</taxon>
        <taxon>Idiomarinaceae</taxon>
        <taxon>Idiomarina</taxon>
    </lineage>
</organism>
<protein>
    <recommendedName>
        <fullName evidence="1">Dual-specificity RNA methyltransferase RlmN</fullName>
        <ecNumber evidence="1">2.1.1.192</ecNumber>
    </recommendedName>
    <alternativeName>
        <fullName evidence="1">23S rRNA (adenine(2503)-C(2))-methyltransferase</fullName>
    </alternativeName>
    <alternativeName>
        <fullName evidence="1">23S rRNA m2A2503 methyltransferase</fullName>
    </alternativeName>
    <alternativeName>
        <fullName evidence="1">Ribosomal RNA large subunit methyltransferase N</fullName>
    </alternativeName>
    <alternativeName>
        <fullName evidence="1">tRNA (adenine(37)-C(2))-methyltransferase</fullName>
    </alternativeName>
    <alternativeName>
        <fullName evidence="1">tRNA m2A37 methyltransferase</fullName>
    </alternativeName>
</protein>
<name>RLMN_IDILO</name>
<accession>Q5QYC0</accession>
<keyword id="KW-0004">4Fe-4S</keyword>
<keyword id="KW-0963">Cytoplasm</keyword>
<keyword id="KW-1015">Disulfide bond</keyword>
<keyword id="KW-0408">Iron</keyword>
<keyword id="KW-0411">Iron-sulfur</keyword>
<keyword id="KW-0479">Metal-binding</keyword>
<keyword id="KW-0489">Methyltransferase</keyword>
<keyword id="KW-1185">Reference proteome</keyword>
<keyword id="KW-0698">rRNA processing</keyword>
<keyword id="KW-0949">S-adenosyl-L-methionine</keyword>
<keyword id="KW-0808">Transferase</keyword>
<keyword id="KW-0819">tRNA processing</keyword>
<feature type="chain" id="PRO_0000350216" description="Dual-specificity RNA methyltransferase RlmN">
    <location>
        <begin position="1"/>
        <end position="378"/>
    </location>
</feature>
<feature type="domain" description="Radical SAM core" evidence="2">
    <location>
        <begin position="103"/>
        <end position="341"/>
    </location>
</feature>
<feature type="active site" description="Proton acceptor" evidence="1">
    <location>
        <position position="97"/>
    </location>
</feature>
<feature type="active site" description="S-methylcysteine intermediate" evidence="1">
    <location>
        <position position="346"/>
    </location>
</feature>
<feature type="binding site" evidence="1">
    <location>
        <position position="117"/>
    </location>
    <ligand>
        <name>[4Fe-4S] cluster</name>
        <dbReference type="ChEBI" id="CHEBI:49883"/>
        <note>4Fe-4S-S-AdoMet</note>
    </ligand>
</feature>
<feature type="binding site" evidence="1">
    <location>
        <position position="121"/>
    </location>
    <ligand>
        <name>[4Fe-4S] cluster</name>
        <dbReference type="ChEBI" id="CHEBI:49883"/>
        <note>4Fe-4S-S-AdoMet</note>
    </ligand>
</feature>
<feature type="binding site" evidence="1">
    <location>
        <position position="124"/>
    </location>
    <ligand>
        <name>[4Fe-4S] cluster</name>
        <dbReference type="ChEBI" id="CHEBI:49883"/>
        <note>4Fe-4S-S-AdoMet</note>
    </ligand>
</feature>
<feature type="binding site" evidence="1">
    <location>
        <begin position="171"/>
        <end position="172"/>
    </location>
    <ligand>
        <name>S-adenosyl-L-methionine</name>
        <dbReference type="ChEBI" id="CHEBI:59789"/>
    </ligand>
</feature>
<feature type="binding site" evidence="1">
    <location>
        <position position="203"/>
    </location>
    <ligand>
        <name>S-adenosyl-L-methionine</name>
        <dbReference type="ChEBI" id="CHEBI:59789"/>
    </ligand>
</feature>
<feature type="binding site" evidence="1">
    <location>
        <begin position="225"/>
        <end position="227"/>
    </location>
    <ligand>
        <name>S-adenosyl-L-methionine</name>
        <dbReference type="ChEBI" id="CHEBI:59789"/>
    </ligand>
</feature>
<feature type="binding site" evidence="1">
    <location>
        <position position="303"/>
    </location>
    <ligand>
        <name>S-adenosyl-L-methionine</name>
        <dbReference type="ChEBI" id="CHEBI:59789"/>
    </ligand>
</feature>
<feature type="disulfide bond" description="(transient)" evidence="1">
    <location>
        <begin position="110"/>
        <end position="346"/>
    </location>
</feature>